<evidence type="ECO:0000255" key="1">
    <source>
        <dbReference type="HAMAP-Rule" id="MF_01333"/>
    </source>
</evidence>
<evidence type="ECO:0000305" key="2"/>
<feature type="chain" id="PRO_1000166119" description="Large ribosomal subunit protein uL5">
    <location>
        <begin position="1"/>
        <end position="181"/>
    </location>
</feature>
<gene>
    <name evidence="1" type="primary">rplE</name>
    <name type="ordered locus">Cla_0071</name>
</gene>
<keyword id="KW-1185">Reference proteome</keyword>
<keyword id="KW-0687">Ribonucleoprotein</keyword>
<keyword id="KW-0689">Ribosomal protein</keyword>
<keyword id="KW-0694">RNA-binding</keyword>
<keyword id="KW-0699">rRNA-binding</keyword>
<keyword id="KW-0820">tRNA-binding</keyword>
<dbReference type="EMBL" id="CP000932">
    <property type="protein sequence ID" value="ACM63437.1"/>
    <property type="molecule type" value="Genomic_DNA"/>
</dbReference>
<dbReference type="RefSeq" id="WP_012660823.1">
    <property type="nucleotide sequence ID" value="NC_012039.1"/>
</dbReference>
<dbReference type="SMR" id="B9KEF2"/>
<dbReference type="STRING" id="306263.Cla_0071"/>
<dbReference type="KEGG" id="cla:CLA_0071"/>
<dbReference type="PATRIC" id="fig|306263.5.peg.70"/>
<dbReference type="eggNOG" id="COG0094">
    <property type="taxonomic scope" value="Bacteria"/>
</dbReference>
<dbReference type="HOGENOM" id="CLU_061015_2_1_7"/>
<dbReference type="Proteomes" id="UP000007727">
    <property type="component" value="Chromosome"/>
</dbReference>
<dbReference type="GO" id="GO:1990904">
    <property type="term" value="C:ribonucleoprotein complex"/>
    <property type="evidence" value="ECO:0007669"/>
    <property type="project" value="UniProtKB-KW"/>
</dbReference>
<dbReference type="GO" id="GO:0005840">
    <property type="term" value="C:ribosome"/>
    <property type="evidence" value="ECO:0007669"/>
    <property type="project" value="UniProtKB-KW"/>
</dbReference>
<dbReference type="GO" id="GO:0019843">
    <property type="term" value="F:rRNA binding"/>
    <property type="evidence" value="ECO:0007669"/>
    <property type="project" value="UniProtKB-UniRule"/>
</dbReference>
<dbReference type="GO" id="GO:0003735">
    <property type="term" value="F:structural constituent of ribosome"/>
    <property type="evidence" value="ECO:0007669"/>
    <property type="project" value="InterPro"/>
</dbReference>
<dbReference type="GO" id="GO:0000049">
    <property type="term" value="F:tRNA binding"/>
    <property type="evidence" value="ECO:0007669"/>
    <property type="project" value="UniProtKB-UniRule"/>
</dbReference>
<dbReference type="GO" id="GO:0006412">
    <property type="term" value="P:translation"/>
    <property type="evidence" value="ECO:0007669"/>
    <property type="project" value="UniProtKB-UniRule"/>
</dbReference>
<dbReference type="FunFam" id="3.30.1440.10:FF:000001">
    <property type="entry name" value="50S ribosomal protein L5"/>
    <property type="match status" value="1"/>
</dbReference>
<dbReference type="Gene3D" id="3.30.1440.10">
    <property type="match status" value="1"/>
</dbReference>
<dbReference type="HAMAP" id="MF_01333_B">
    <property type="entry name" value="Ribosomal_uL5_B"/>
    <property type="match status" value="1"/>
</dbReference>
<dbReference type="InterPro" id="IPR002132">
    <property type="entry name" value="Ribosomal_uL5"/>
</dbReference>
<dbReference type="InterPro" id="IPR020930">
    <property type="entry name" value="Ribosomal_uL5_bac-type"/>
</dbReference>
<dbReference type="InterPro" id="IPR031309">
    <property type="entry name" value="Ribosomal_uL5_C"/>
</dbReference>
<dbReference type="InterPro" id="IPR020929">
    <property type="entry name" value="Ribosomal_uL5_CS"/>
</dbReference>
<dbReference type="InterPro" id="IPR022803">
    <property type="entry name" value="Ribosomal_uL5_dom_sf"/>
</dbReference>
<dbReference type="InterPro" id="IPR031310">
    <property type="entry name" value="Ribosomal_uL5_N"/>
</dbReference>
<dbReference type="NCBIfam" id="NF000585">
    <property type="entry name" value="PRK00010.1"/>
    <property type="match status" value="1"/>
</dbReference>
<dbReference type="PANTHER" id="PTHR11994">
    <property type="entry name" value="60S RIBOSOMAL PROTEIN L11-RELATED"/>
    <property type="match status" value="1"/>
</dbReference>
<dbReference type="Pfam" id="PF00281">
    <property type="entry name" value="Ribosomal_L5"/>
    <property type="match status" value="1"/>
</dbReference>
<dbReference type="Pfam" id="PF00673">
    <property type="entry name" value="Ribosomal_L5_C"/>
    <property type="match status" value="1"/>
</dbReference>
<dbReference type="PIRSF" id="PIRSF002161">
    <property type="entry name" value="Ribosomal_L5"/>
    <property type="match status" value="1"/>
</dbReference>
<dbReference type="SUPFAM" id="SSF55282">
    <property type="entry name" value="RL5-like"/>
    <property type="match status" value="1"/>
</dbReference>
<dbReference type="PROSITE" id="PS00358">
    <property type="entry name" value="RIBOSOMAL_L5"/>
    <property type="match status" value="1"/>
</dbReference>
<comment type="function">
    <text evidence="1">This is one of the proteins that bind and probably mediate the attachment of the 5S RNA into the large ribosomal subunit, where it forms part of the central protuberance. In the 70S ribosome it contacts protein S13 of the 30S subunit (bridge B1b), connecting the 2 subunits; this bridge is implicated in subunit movement. Contacts the P site tRNA; the 5S rRNA and some of its associated proteins might help stabilize positioning of ribosome-bound tRNAs.</text>
</comment>
<comment type="subunit">
    <text evidence="1">Part of the 50S ribosomal subunit; part of the 5S rRNA/L5/L18/L25 subcomplex. Contacts the 5S rRNA and the P site tRNA. Forms a bridge to the 30S subunit in the 70S ribosome.</text>
</comment>
<comment type="similarity">
    <text evidence="1">Belongs to the universal ribosomal protein uL5 family.</text>
</comment>
<protein>
    <recommendedName>
        <fullName evidence="1">Large ribosomal subunit protein uL5</fullName>
    </recommendedName>
    <alternativeName>
        <fullName evidence="2">50S ribosomal protein L5</fullName>
    </alternativeName>
</protein>
<reference key="1">
    <citation type="journal article" date="2008" name="Foodborne Pathog. Dis.">
        <title>The complete genome sequence and analysis of the human pathogen Campylobacter lari.</title>
        <authorList>
            <person name="Miller W.G."/>
            <person name="Wang G."/>
            <person name="Binnewies T.T."/>
            <person name="Parker C.T."/>
        </authorList>
    </citation>
    <scope>NUCLEOTIDE SEQUENCE [LARGE SCALE GENOMIC DNA]</scope>
    <source>
        <strain>RM2100 / D67 / ATCC BAA-1060</strain>
    </source>
</reference>
<organism>
    <name type="scientific">Campylobacter lari (strain RM2100 / D67 / ATCC BAA-1060)</name>
    <dbReference type="NCBI Taxonomy" id="306263"/>
    <lineage>
        <taxon>Bacteria</taxon>
        <taxon>Pseudomonadati</taxon>
        <taxon>Campylobacterota</taxon>
        <taxon>Epsilonproteobacteria</taxon>
        <taxon>Campylobacterales</taxon>
        <taxon>Campylobacteraceae</taxon>
        <taxon>Campylobacter</taxon>
    </lineage>
</organism>
<sequence>MMRLKEKYTQNIKPALVKEFDIKNPMLIPFIEKVVISVGAGELAKDQKVLQNVADTISLIAGQKAVITKAKKSVAGFKVREGFPVGVMVTLRKDNMYAFLDKLITIALPRVKDFRGLPRDGFDGRGNYNFGLDEQLMFPEVEYDKILRTHGMNISIVTTAKSDKEAQKLLELFGVPFAKGK</sequence>
<name>RL5_CAMLR</name>
<proteinExistence type="inferred from homology"/>
<accession>B9KEF2</accession>